<comment type="function">
    <text evidence="1">Catalyzes the synthesis of GMP from XMP.</text>
</comment>
<comment type="catalytic activity">
    <reaction evidence="1">
        <text>XMP + L-glutamine + ATP + H2O = GMP + L-glutamate + AMP + diphosphate + 2 H(+)</text>
        <dbReference type="Rhea" id="RHEA:11680"/>
        <dbReference type="ChEBI" id="CHEBI:15377"/>
        <dbReference type="ChEBI" id="CHEBI:15378"/>
        <dbReference type="ChEBI" id="CHEBI:29985"/>
        <dbReference type="ChEBI" id="CHEBI:30616"/>
        <dbReference type="ChEBI" id="CHEBI:33019"/>
        <dbReference type="ChEBI" id="CHEBI:57464"/>
        <dbReference type="ChEBI" id="CHEBI:58115"/>
        <dbReference type="ChEBI" id="CHEBI:58359"/>
        <dbReference type="ChEBI" id="CHEBI:456215"/>
        <dbReference type="EC" id="6.3.5.2"/>
    </reaction>
</comment>
<comment type="pathway">
    <text evidence="1">Purine metabolism; GMP biosynthesis; GMP from XMP (L-Gln route): step 1/1.</text>
</comment>
<comment type="subunit">
    <text evidence="1">Heterodimer composed of a glutamine amidotransferase subunit (A) and a GMP-binding subunit (B).</text>
</comment>
<accession>O28949</accession>
<feature type="chain" id="PRO_0000140217" description="GMP synthase [glutamine-hydrolyzing] subunit A">
    <location>
        <begin position="1"/>
        <end position="183"/>
    </location>
</feature>
<feature type="domain" description="Glutamine amidotransferase type-1" evidence="1">
    <location>
        <begin position="2"/>
        <end position="183"/>
    </location>
</feature>
<feature type="active site" description="Nucleophile" evidence="1">
    <location>
        <position position="74"/>
    </location>
</feature>
<feature type="active site" evidence="1">
    <location>
        <position position="161"/>
    </location>
</feature>
<feature type="active site" evidence="1">
    <location>
        <position position="163"/>
    </location>
</feature>
<sequence>MKIYVIYNYGQYNHLIHRTLRDLGVETKLVENTTPVEQLKDVDGLVIGGGPSLDRTGNCELYLKELDVPMIGICLGHQLMAKVFGGEVGKGSMGGYSEVKVRIVEDDELFEGIPREITVWASHMDEVKKLPEGFKRLAESDICKIEAMRHEKKPLYGVQWHPEVYHSQFGVELYRNFIEICKK</sequence>
<organism>
    <name type="scientific">Archaeoglobus fulgidus (strain ATCC 49558 / DSM 4304 / JCM 9628 / NBRC 100126 / VC-16)</name>
    <dbReference type="NCBI Taxonomy" id="224325"/>
    <lineage>
        <taxon>Archaea</taxon>
        <taxon>Methanobacteriati</taxon>
        <taxon>Methanobacteriota</taxon>
        <taxon>Archaeoglobi</taxon>
        <taxon>Archaeoglobales</taxon>
        <taxon>Archaeoglobaceae</taxon>
        <taxon>Archaeoglobus</taxon>
    </lineage>
</organism>
<proteinExistence type="inferred from homology"/>
<keyword id="KW-0067">ATP-binding</keyword>
<keyword id="KW-0315">Glutamine amidotransferase</keyword>
<keyword id="KW-0332">GMP biosynthesis</keyword>
<keyword id="KW-0436">Ligase</keyword>
<keyword id="KW-0547">Nucleotide-binding</keyword>
<keyword id="KW-0658">Purine biosynthesis</keyword>
<keyword id="KW-1185">Reference proteome</keyword>
<evidence type="ECO:0000255" key="1">
    <source>
        <dbReference type="HAMAP-Rule" id="MF_01510"/>
    </source>
</evidence>
<protein>
    <recommendedName>
        <fullName evidence="1">GMP synthase [glutamine-hydrolyzing] subunit A</fullName>
        <ecNumber evidence="1">6.3.5.2</ecNumber>
    </recommendedName>
    <alternativeName>
        <fullName evidence="1">Glutamine amidotransferase</fullName>
    </alternativeName>
</protein>
<gene>
    <name evidence="1" type="primary">guaAA</name>
    <name type="ordered locus">AF_1320</name>
</gene>
<dbReference type="EC" id="6.3.5.2" evidence="1"/>
<dbReference type="EMBL" id="AE000782">
    <property type="protein sequence ID" value="AAB89925.1"/>
    <property type="molecule type" value="Genomic_DNA"/>
</dbReference>
<dbReference type="PIR" id="G69414">
    <property type="entry name" value="G69414"/>
</dbReference>
<dbReference type="RefSeq" id="WP_010878817.1">
    <property type="nucleotide sequence ID" value="NC_000917.1"/>
</dbReference>
<dbReference type="SMR" id="O28949"/>
<dbReference type="STRING" id="224325.AF_1320"/>
<dbReference type="MEROPS" id="C26.A31"/>
<dbReference type="PaxDb" id="224325-AF_1320"/>
<dbReference type="EnsemblBacteria" id="AAB89925">
    <property type="protein sequence ID" value="AAB89925"/>
    <property type="gene ID" value="AF_1320"/>
</dbReference>
<dbReference type="KEGG" id="afu:AF_1320"/>
<dbReference type="eggNOG" id="arCOG00087">
    <property type="taxonomic scope" value="Archaea"/>
</dbReference>
<dbReference type="HOGENOM" id="CLU_014340_1_4_2"/>
<dbReference type="OrthoDB" id="10772at2157"/>
<dbReference type="PhylomeDB" id="O28949"/>
<dbReference type="UniPathway" id="UPA00189">
    <property type="reaction ID" value="UER00296"/>
</dbReference>
<dbReference type="Proteomes" id="UP000002199">
    <property type="component" value="Chromosome"/>
</dbReference>
<dbReference type="GO" id="GO:0005829">
    <property type="term" value="C:cytosol"/>
    <property type="evidence" value="ECO:0007669"/>
    <property type="project" value="TreeGrafter"/>
</dbReference>
<dbReference type="GO" id="GO:0005524">
    <property type="term" value="F:ATP binding"/>
    <property type="evidence" value="ECO:0007669"/>
    <property type="project" value="UniProtKB-KW"/>
</dbReference>
<dbReference type="GO" id="GO:0003921">
    <property type="term" value="F:GMP synthase activity"/>
    <property type="evidence" value="ECO:0007669"/>
    <property type="project" value="TreeGrafter"/>
</dbReference>
<dbReference type="CDD" id="cd01742">
    <property type="entry name" value="GATase1_GMP_Synthase"/>
    <property type="match status" value="1"/>
</dbReference>
<dbReference type="FunFam" id="3.40.50.880:FF:000047">
    <property type="entry name" value="GMP synthase [glutamine-hydrolyzing] subunit A"/>
    <property type="match status" value="1"/>
</dbReference>
<dbReference type="Gene3D" id="3.40.50.880">
    <property type="match status" value="1"/>
</dbReference>
<dbReference type="HAMAP" id="MF_01510">
    <property type="entry name" value="GMP_synthase_A"/>
    <property type="match status" value="1"/>
</dbReference>
<dbReference type="InterPro" id="IPR029062">
    <property type="entry name" value="Class_I_gatase-like"/>
</dbReference>
<dbReference type="InterPro" id="IPR017926">
    <property type="entry name" value="GATASE"/>
</dbReference>
<dbReference type="InterPro" id="IPR004739">
    <property type="entry name" value="GMP_synth_GATase"/>
</dbReference>
<dbReference type="InterPro" id="IPR023686">
    <property type="entry name" value="GMP_synthase_A"/>
</dbReference>
<dbReference type="NCBIfam" id="TIGR00888">
    <property type="entry name" value="guaA_Nterm"/>
    <property type="match status" value="1"/>
</dbReference>
<dbReference type="NCBIfam" id="NF001975">
    <property type="entry name" value="PRK00758.1"/>
    <property type="match status" value="1"/>
</dbReference>
<dbReference type="PANTHER" id="PTHR11922:SF2">
    <property type="entry name" value="GMP SYNTHASE [GLUTAMINE-HYDROLYZING]"/>
    <property type="match status" value="1"/>
</dbReference>
<dbReference type="PANTHER" id="PTHR11922">
    <property type="entry name" value="GMP SYNTHASE-RELATED"/>
    <property type="match status" value="1"/>
</dbReference>
<dbReference type="Pfam" id="PF00117">
    <property type="entry name" value="GATase"/>
    <property type="match status" value="1"/>
</dbReference>
<dbReference type="PRINTS" id="PR00097">
    <property type="entry name" value="ANTSNTHASEII"/>
</dbReference>
<dbReference type="PRINTS" id="PR00096">
    <property type="entry name" value="GATASE"/>
</dbReference>
<dbReference type="SUPFAM" id="SSF52317">
    <property type="entry name" value="Class I glutamine amidotransferase-like"/>
    <property type="match status" value="1"/>
</dbReference>
<dbReference type="PROSITE" id="PS51273">
    <property type="entry name" value="GATASE_TYPE_1"/>
    <property type="match status" value="1"/>
</dbReference>
<name>GUAAA_ARCFU</name>
<reference key="1">
    <citation type="journal article" date="1997" name="Nature">
        <title>The complete genome sequence of the hyperthermophilic, sulphate-reducing archaeon Archaeoglobus fulgidus.</title>
        <authorList>
            <person name="Klenk H.-P."/>
            <person name="Clayton R.A."/>
            <person name="Tomb J.-F."/>
            <person name="White O."/>
            <person name="Nelson K.E."/>
            <person name="Ketchum K.A."/>
            <person name="Dodson R.J."/>
            <person name="Gwinn M.L."/>
            <person name="Hickey E.K."/>
            <person name="Peterson J.D."/>
            <person name="Richardson D.L."/>
            <person name="Kerlavage A.R."/>
            <person name="Graham D.E."/>
            <person name="Kyrpides N.C."/>
            <person name="Fleischmann R.D."/>
            <person name="Quackenbush J."/>
            <person name="Lee N.H."/>
            <person name="Sutton G.G."/>
            <person name="Gill S.R."/>
            <person name="Kirkness E.F."/>
            <person name="Dougherty B.A."/>
            <person name="McKenney K."/>
            <person name="Adams M.D."/>
            <person name="Loftus B.J."/>
            <person name="Peterson S.N."/>
            <person name="Reich C.I."/>
            <person name="McNeil L.K."/>
            <person name="Badger J.H."/>
            <person name="Glodek A."/>
            <person name="Zhou L."/>
            <person name="Overbeek R."/>
            <person name="Gocayne J.D."/>
            <person name="Weidman J.F."/>
            <person name="McDonald L.A."/>
            <person name="Utterback T.R."/>
            <person name="Cotton M.D."/>
            <person name="Spriggs T."/>
            <person name="Artiach P."/>
            <person name="Kaine B.P."/>
            <person name="Sykes S.M."/>
            <person name="Sadow P.W."/>
            <person name="D'Andrea K.P."/>
            <person name="Bowman C."/>
            <person name="Fujii C."/>
            <person name="Garland S.A."/>
            <person name="Mason T.M."/>
            <person name="Olsen G.J."/>
            <person name="Fraser C.M."/>
            <person name="Smith H.O."/>
            <person name="Woese C.R."/>
            <person name="Venter J.C."/>
        </authorList>
    </citation>
    <scope>NUCLEOTIDE SEQUENCE [LARGE SCALE GENOMIC DNA]</scope>
    <source>
        <strain>ATCC 49558 / DSM 4304 / JCM 9628 / NBRC 100126 / VC-16</strain>
    </source>
</reference>